<proteinExistence type="predicted"/>
<sequence>MSFMVSEEVTVKEGGPRMIVTGYSSGMVECRWYDGYGVKREAFHETELVPGEGSRSAEEV</sequence>
<name>YODC_ECOLI</name>
<protein>
    <recommendedName>
        <fullName>Uncharacterized protein YodC</fullName>
    </recommendedName>
</protein>
<feature type="chain" id="PRO_0000169102" description="Uncharacterized protein YodC">
    <location>
        <begin position="1"/>
        <end position="60"/>
    </location>
</feature>
<keyword id="KW-1185">Reference proteome</keyword>
<dbReference type="EMBL" id="U00096">
    <property type="protein sequence ID" value="AAC75023.1"/>
    <property type="molecule type" value="Genomic_DNA"/>
</dbReference>
<dbReference type="EMBL" id="AP009048">
    <property type="protein sequence ID" value="BAE76556.1"/>
    <property type="molecule type" value="Genomic_DNA"/>
</dbReference>
<dbReference type="PIR" id="A64960">
    <property type="entry name" value="A64960"/>
</dbReference>
<dbReference type="RefSeq" id="NP_416466.1">
    <property type="nucleotide sequence ID" value="NC_000913.3"/>
</dbReference>
<dbReference type="RefSeq" id="WP_000009307.1">
    <property type="nucleotide sequence ID" value="NZ_SSZK01000070.1"/>
</dbReference>
<dbReference type="SMR" id="P64517"/>
<dbReference type="BioGRID" id="4261053">
    <property type="interactions" value="15"/>
</dbReference>
<dbReference type="DIP" id="DIP-48226N"/>
<dbReference type="FunCoup" id="P64517">
    <property type="interactions" value="32"/>
</dbReference>
<dbReference type="IntAct" id="P64517">
    <property type="interactions" value="17"/>
</dbReference>
<dbReference type="STRING" id="511145.b1957"/>
<dbReference type="jPOST" id="P64517"/>
<dbReference type="PaxDb" id="511145-b1957"/>
<dbReference type="EnsemblBacteria" id="AAC75023">
    <property type="protein sequence ID" value="AAC75023"/>
    <property type="gene ID" value="b1957"/>
</dbReference>
<dbReference type="GeneID" id="946466"/>
<dbReference type="KEGG" id="ecj:JW1940"/>
<dbReference type="KEGG" id="eco:b1957"/>
<dbReference type="KEGG" id="ecoc:C3026_11070"/>
<dbReference type="PATRIC" id="fig|511145.12.peg.2036"/>
<dbReference type="EchoBASE" id="EB4054"/>
<dbReference type="eggNOG" id="COG5475">
    <property type="taxonomic scope" value="Bacteria"/>
</dbReference>
<dbReference type="HOGENOM" id="CLU_196663_0_0_6"/>
<dbReference type="InParanoid" id="P64517"/>
<dbReference type="OMA" id="RMVVTGY"/>
<dbReference type="OrthoDB" id="6541609at2"/>
<dbReference type="PhylomeDB" id="P64517"/>
<dbReference type="BioCyc" id="EcoCyc:G7050-MONOMER"/>
<dbReference type="PRO" id="PR:P64517"/>
<dbReference type="Proteomes" id="UP000000625">
    <property type="component" value="Chromosome"/>
</dbReference>
<dbReference type="InterPro" id="IPR019226">
    <property type="entry name" value="DUF2158"/>
</dbReference>
<dbReference type="Pfam" id="PF09926">
    <property type="entry name" value="DUF2158"/>
    <property type="match status" value="1"/>
</dbReference>
<gene>
    <name type="primary">yodC</name>
    <name type="ordered locus">b1957</name>
    <name type="ordered locus">JW1940</name>
</gene>
<reference key="1">
    <citation type="journal article" date="1997" name="Science">
        <title>The complete genome sequence of Escherichia coli K-12.</title>
        <authorList>
            <person name="Blattner F.R."/>
            <person name="Plunkett G. III"/>
            <person name="Bloch C.A."/>
            <person name="Perna N.T."/>
            <person name="Burland V."/>
            <person name="Riley M."/>
            <person name="Collado-Vides J."/>
            <person name="Glasner J.D."/>
            <person name="Rode C.K."/>
            <person name="Mayhew G.F."/>
            <person name="Gregor J."/>
            <person name="Davis N.W."/>
            <person name="Kirkpatrick H.A."/>
            <person name="Goeden M.A."/>
            <person name="Rose D.J."/>
            <person name="Mau B."/>
            <person name="Shao Y."/>
        </authorList>
    </citation>
    <scope>NUCLEOTIDE SEQUENCE [LARGE SCALE GENOMIC DNA]</scope>
    <source>
        <strain>K12 / MG1655 / ATCC 47076</strain>
    </source>
</reference>
<reference key="2">
    <citation type="journal article" date="2006" name="Mol. Syst. Biol.">
        <title>Highly accurate genome sequences of Escherichia coli K-12 strains MG1655 and W3110.</title>
        <authorList>
            <person name="Hayashi K."/>
            <person name="Morooka N."/>
            <person name="Yamamoto Y."/>
            <person name="Fujita K."/>
            <person name="Isono K."/>
            <person name="Choi S."/>
            <person name="Ohtsubo E."/>
            <person name="Baba T."/>
            <person name="Wanner B.L."/>
            <person name="Mori H."/>
            <person name="Horiuchi T."/>
        </authorList>
    </citation>
    <scope>NUCLEOTIDE SEQUENCE [LARGE SCALE GENOMIC DNA]</scope>
    <source>
        <strain>K12 / W3110 / ATCC 27325 / DSM 5911</strain>
    </source>
</reference>
<accession>P64517</accession>
<accession>P76331</accession>
<accession>Q2MB00</accession>
<organism>
    <name type="scientific">Escherichia coli (strain K12)</name>
    <dbReference type="NCBI Taxonomy" id="83333"/>
    <lineage>
        <taxon>Bacteria</taxon>
        <taxon>Pseudomonadati</taxon>
        <taxon>Pseudomonadota</taxon>
        <taxon>Gammaproteobacteria</taxon>
        <taxon>Enterobacterales</taxon>
        <taxon>Enterobacteriaceae</taxon>
        <taxon>Escherichia</taxon>
    </lineage>
</organism>